<protein>
    <recommendedName>
        <fullName>Melatonin receptor type 1C</fullName>
        <shortName>Mel-1C-R</shortName>
        <shortName>Mel1c (alpha) receptor</shortName>
        <shortName>Mel1c receptor</shortName>
    </recommendedName>
</protein>
<comment type="function">
    <text evidence="3 4">High affinity receptor for melatonin. Likely to mediate the potent effects of melatonin on pigment aggregation in melanophores. The activity of this receptor is mediated by pertussis toxin sensitive G proteins that inhibit adenylate cyclase activity.</text>
</comment>
<comment type="subcellular location">
    <subcellularLocation>
        <location>Cell membrane</location>
        <topology>Multi-pass membrane protein</topology>
    </subcellularLocation>
</comment>
<comment type="alternative products">
    <event type="alternative splicing"/>
    <isoform>
        <id>P49219-1</id>
        <name>1</name>
        <sequence type="displayed"/>
    </isoform>
    <isoform>
        <id>P49219-2</id>
        <name>2</name>
        <sequence type="described" ref="VSP_040031 VSP_040032"/>
    </isoform>
</comment>
<comment type="tissue specificity">
    <text evidence="3">Moderately expressed in dermal melanophores.</text>
</comment>
<comment type="similarity">
    <text evidence="2">Belongs to the G-protein coupled receptor 1 family.</text>
</comment>
<dbReference type="EMBL" id="U09561">
    <property type="protein sequence ID" value="AAA70166.1"/>
    <property type="molecule type" value="mRNA"/>
</dbReference>
<dbReference type="EMBL" id="U67879">
    <property type="protein sequence ID" value="AAB48389.1"/>
    <property type="molecule type" value="mRNA"/>
</dbReference>
<dbReference type="EMBL" id="U67880">
    <property type="protein sequence ID" value="AAB48390.1"/>
    <property type="molecule type" value="mRNA"/>
</dbReference>
<dbReference type="PIR" id="I51666">
    <property type="entry name" value="I51666"/>
</dbReference>
<dbReference type="RefSeq" id="NP_001081388.1">
    <molecule id="P49219-1"/>
    <property type="nucleotide sequence ID" value="NM_001087919.1"/>
</dbReference>
<dbReference type="SMR" id="P49219"/>
<dbReference type="BindingDB" id="P49219"/>
<dbReference type="ChEMBL" id="CHEMBL5495"/>
<dbReference type="DrugCentral" id="P49219"/>
<dbReference type="GlyCosmos" id="P49219">
    <property type="glycosylation" value="1 site, No reported glycans"/>
</dbReference>
<dbReference type="GeneID" id="397808"/>
<dbReference type="KEGG" id="xla:397808"/>
<dbReference type="AGR" id="Xenbase:XB-GENE-6466037"/>
<dbReference type="CTD" id="397808"/>
<dbReference type="Xenbase" id="XB-GENE-6466037">
    <property type="gene designation" value="mtnr1c.S"/>
</dbReference>
<dbReference type="OrthoDB" id="10044919at2759"/>
<dbReference type="Proteomes" id="UP000186698">
    <property type="component" value="Chromosome 8S"/>
</dbReference>
<dbReference type="Bgee" id="397808">
    <property type="expression patterns" value="Expressed in oocyte and 12 other cell types or tissues"/>
</dbReference>
<dbReference type="GO" id="GO:0005886">
    <property type="term" value="C:plasma membrane"/>
    <property type="evidence" value="ECO:0000318"/>
    <property type="project" value="GO_Central"/>
</dbReference>
<dbReference type="GO" id="GO:0004930">
    <property type="term" value="F:G protein-coupled receptor activity"/>
    <property type="evidence" value="ECO:0000318"/>
    <property type="project" value="GO_Central"/>
</dbReference>
<dbReference type="GO" id="GO:0008502">
    <property type="term" value="F:melatonin receptor activity"/>
    <property type="evidence" value="ECO:0007669"/>
    <property type="project" value="InterPro"/>
</dbReference>
<dbReference type="GO" id="GO:0007186">
    <property type="term" value="P:G protein-coupled receptor signaling pathway"/>
    <property type="evidence" value="ECO:0000318"/>
    <property type="project" value="GO_Central"/>
</dbReference>
<dbReference type="CDD" id="cd15401">
    <property type="entry name" value="7tmA_Mel1C"/>
    <property type="match status" value="1"/>
</dbReference>
<dbReference type="FunFam" id="1.20.1070.10:FF:000056">
    <property type="entry name" value="Melatonin receptor type 1A"/>
    <property type="match status" value="1"/>
</dbReference>
<dbReference type="Gene3D" id="1.20.1070.10">
    <property type="entry name" value="Rhodopsin 7-helix transmembrane proteins"/>
    <property type="match status" value="1"/>
</dbReference>
<dbReference type="InterPro" id="IPR000276">
    <property type="entry name" value="GPCR_Rhodpsn"/>
</dbReference>
<dbReference type="InterPro" id="IPR017452">
    <property type="entry name" value="GPCR_Rhodpsn_7TM"/>
</dbReference>
<dbReference type="InterPro" id="IPR002279">
    <property type="entry name" value="Mel_rcpt_1C"/>
</dbReference>
<dbReference type="InterPro" id="IPR000025">
    <property type="entry name" value="Melatonin_rcpt"/>
</dbReference>
<dbReference type="PANTHER" id="PTHR24228">
    <property type="entry name" value="B2 BRADYKININ RECEPTOR/ANGIOTENSIN II RECEPTOR"/>
    <property type="match status" value="1"/>
</dbReference>
<dbReference type="PANTHER" id="PTHR24228:SF56">
    <property type="entry name" value="MELATONIN-RELATED RECEPTOR"/>
    <property type="match status" value="1"/>
</dbReference>
<dbReference type="Pfam" id="PF00001">
    <property type="entry name" value="7tm_1"/>
    <property type="match status" value="1"/>
</dbReference>
<dbReference type="PRINTS" id="PR00237">
    <property type="entry name" value="GPCRRHODOPSN"/>
</dbReference>
<dbReference type="PRINTS" id="PR01150">
    <property type="entry name" value="MELATONIN1CR"/>
</dbReference>
<dbReference type="PRINTS" id="PR00857">
    <property type="entry name" value="MELATONINR"/>
</dbReference>
<dbReference type="SMART" id="SM01381">
    <property type="entry name" value="7TM_GPCR_Srsx"/>
    <property type="match status" value="1"/>
</dbReference>
<dbReference type="SUPFAM" id="SSF81321">
    <property type="entry name" value="Family A G protein-coupled receptor-like"/>
    <property type="match status" value="1"/>
</dbReference>
<dbReference type="PROSITE" id="PS00237">
    <property type="entry name" value="G_PROTEIN_RECEP_F1_1"/>
    <property type="match status" value="1"/>
</dbReference>
<dbReference type="PROSITE" id="PS50262">
    <property type="entry name" value="G_PROTEIN_RECEP_F1_2"/>
    <property type="match status" value="1"/>
</dbReference>
<keyword id="KW-0025">Alternative splicing</keyword>
<keyword id="KW-1003">Cell membrane</keyword>
<keyword id="KW-1015">Disulfide bond</keyword>
<keyword id="KW-0297">G-protein coupled receptor</keyword>
<keyword id="KW-0325">Glycoprotein</keyword>
<keyword id="KW-0472">Membrane</keyword>
<keyword id="KW-0675">Receptor</keyword>
<keyword id="KW-1185">Reference proteome</keyword>
<keyword id="KW-0807">Transducer</keyword>
<keyword id="KW-0812">Transmembrane</keyword>
<keyword id="KW-1133">Transmembrane helix</keyword>
<accession>P49219</accession>
<accession>P87499</accession>
<gene>
    <name type="primary">mtnr1c</name>
</gene>
<sequence length="420" mass="47425">MMEVNSTCLDCRTPGTIRTEQDAQDSASQGLTSALAVVLIFTIVVDVLGNILVILSVLRNKKLQNAGNLFVVSLSIADLVVAVYPYPVILIAIFQNGWTLGNIHCQISGFLMGLSVIGSVFNITAIAINRYCYICHSLRYDKLYNQRSTWCYLGLTWILTIIAIVPNFFVGSLQYDPRIFSCTFAQTVSSSYTITVVVVHFIVPLSVVTFCYLRIWVLVIQVKHRVRQDFKQKLTQTDLRNFLTMFVVFVLFAVCWAPLNFIGLAVAINPFHVAPKIPEWLFVLSYFMAYFNSCLNAVIYGVLNQNFRKEYKRILMSLLTPRLLFLDTSRGGTEGLKSKPSPAVTNNNQADMLGEARSLWLSRRNGAKMVIIIRPRKAQIAIIHQIFWPQSSWATCRQDTKITGEEDGCRELCKDGISQR</sequence>
<feature type="chain" id="PRO_0000069877" description="Melatonin receptor type 1C">
    <location>
        <begin position="1"/>
        <end position="420"/>
    </location>
</feature>
<feature type="topological domain" description="Extracellular" evidence="1">
    <location>
        <begin position="1"/>
        <end position="34"/>
    </location>
</feature>
<feature type="transmembrane region" description="Helical; Name=1" evidence="1">
    <location>
        <begin position="35"/>
        <end position="55"/>
    </location>
</feature>
<feature type="topological domain" description="Cytoplasmic" evidence="1">
    <location>
        <begin position="56"/>
        <end position="73"/>
    </location>
</feature>
<feature type="transmembrane region" description="Helical; Name=2" evidence="1">
    <location>
        <begin position="74"/>
        <end position="94"/>
    </location>
</feature>
<feature type="topological domain" description="Extracellular" evidence="1">
    <location>
        <begin position="95"/>
        <end position="106"/>
    </location>
</feature>
<feature type="transmembrane region" description="Helical; Name=3" evidence="1">
    <location>
        <begin position="107"/>
        <end position="127"/>
    </location>
</feature>
<feature type="topological domain" description="Cytoplasmic" evidence="1">
    <location>
        <begin position="128"/>
        <end position="152"/>
    </location>
</feature>
<feature type="transmembrane region" description="Helical; Name=4" evidence="1">
    <location>
        <begin position="153"/>
        <end position="173"/>
    </location>
</feature>
<feature type="topological domain" description="Extracellular" evidence="1">
    <location>
        <begin position="174"/>
        <end position="192"/>
    </location>
</feature>
<feature type="transmembrane region" description="Helical; Name=5" evidence="1">
    <location>
        <begin position="193"/>
        <end position="213"/>
    </location>
</feature>
<feature type="topological domain" description="Cytoplasmic" evidence="1">
    <location>
        <begin position="214"/>
        <end position="245"/>
    </location>
</feature>
<feature type="transmembrane region" description="Helical; Name=6" evidence="1">
    <location>
        <begin position="246"/>
        <end position="266"/>
    </location>
</feature>
<feature type="topological domain" description="Extracellular" evidence="1">
    <location>
        <begin position="267"/>
        <end position="279"/>
    </location>
</feature>
<feature type="transmembrane region" description="Helical; Name=7" evidence="1">
    <location>
        <begin position="280"/>
        <end position="303"/>
    </location>
</feature>
<feature type="topological domain" description="Cytoplasmic" evidence="1">
    <location>
        <begin position="304"/>
        <end position="420"/>
    </location>
</feature>
<feature type="glycosylation site" description="N-linked (GlcNAc...) asparagine" evidence="1">
    <location>
        <position position="5"/>
    </location>
</feature>
<feature type="disulfide bond" evidence="2">
    <location>
        <begin position="105"/>
        <end position="182"/>
    </location>
</feature>
<feature type="splice variant" id="VSP_040031" description="In isoform 2." evidence="5">
    <original>LG</original>
    <variation>YV</variation>
    <location>
        <begin position="353"/>
        <end position="354"/>
    </location>
</feature>
<feature type="splice variant" id="VSP_040032" description="In isoform 2." evidence="5">
    <location>
        <begin position="355"/>
        <end position="420"/>
    </location>
</feature>
<organism>
    <name type="scientific">Xenopus laevis</name>
    <name type="common">African clawed frog</name>
    <dbReference type="NCBI Taxonomy" id="8355"/>
    <lineage>
        <taxon>Eukaryota</taxon>
        <taxon>Metazoa</taxon>
        <taxon>Chordata</taxon>
        <taxon>Craniata</taxon>
        <taxon>Vertebrata</taxon>
        <taxon>Euteleostomi</taxon>
        <taxon>Amphibia</taxon>
        <taxon>Batrachia</taxon>
        <taxon>Anura</taxon>
        <taxon>Pipoidea</taxon>
        <taxon>Pipidae</taxon>
        <taxon>Xenopodinae</taxon>
        <taxon>Xenopus</taxon>
        <taxon>Xenopus</taxon>
    </lineage>
</organism>
<evidence type="ECO:0000255" key="1"/>
<evidence type="ECO:0000255" key="2">
    <source>
        <dbReference type="PROSITE-ProRule" id="PRU00521"/>
    </source>
</evidence>
<evidence type="ECO:0000269" key="3">
    <source>
    </source>
</evidence>
<evidence type="ECO:0000269" key="4">
    <source>
    </source>
</evidence>
<evidence type="ECO:0000303" key="5">
    <source>
    </source>
</evidence>
<reference key="1">
    <citation type="journal article" date="1994" name="Proc. Natl. Acad. Sci. U.S.A.">
        <title>Expression cloning of a high-affinity melatonin receptor from Xenopus dermal melanophores.</title>
        <authorList>
            <person name="Ebisawa T."/>
            <person name="Karne S."/>
            <person name="Lerner M.R."/>
            <person name="Reppert S.M."/>
        </authorList>
    </citation>
    <scope>NUCLEOTIDE SEQUENCE [MRNA] (ISOFORM 1)</scope>
    <scope>FUNCTION</scope>
    <scope>TISSUE SPECIFICITY</scope>
    <source>
        <tissue>Dermal melanophore</tissue>
    </source>
</reference>
<reference key="2">
    <citation type="journal article" date="1997" name="Mol. Endocrinol.">
        <title>Novel isoforms of Mel1c melatonin receptors modulating intracellular cyclic guanosine 3',5'-monophosphate levels.</title>
        <authorList>
            <person name="Jockers R."/>
            <person name="Petit L."/>
            <person name="Lacroix I."/>
            <person name="de Coppet P."/>
            <person name="Barrett P."/>
            <person name="Morgan P.J."/>
            <person name="Guardiola B."/>
            <person name="Delagrange P."/>
            <person name="Marullo S."/>
            <person name="Strosberg A.D."/>
        </authorList>
    </citation>
    <scope>NUCLEOTIDE SEQUENCE [MRNA] (ISOFORM 2)</scope>
    <scope>FUNCTION</scope>
    <source>
        <tissue>Dermal melanophore</tissue>
    </source>
</reference>
<name>MTR1C_XENLA</name>
<proteinExistence type="evidence at transcript level"/>